<reference key="1">
    <citation type="journal article" date="2009" name="PLoS Genet.">
        <title>Organised genome dynamics in the Escherichia coli species results in highly diverse adaptive paths.</title>
        <authorList>
            <person name="Touchon M."/>
            <person name="Hoede C."/>
            <person name="Tenaillon O."/>
            <person name="Barbe V."/>
            <person name="Baeriswyl S."/>
            <person name="Bidet P."/>
            <person name="Bingen E."/>
            <person name="Bonacorsi S."/>
            <person name="Bouchier C."/>
            <person name="Bouvet O."/>
            <person name="Calteau A."/>
            <person name="Chiapello H."/>
            <person name="Clermont O."/>
            <person name="Cruveiller S."/>
            <person name="Danchin A."/>
            <person name="Diard M."/>
            <person name="Dossat C."/>
            <person name="Karoui M.E."/>
            <person name="Frapy E."/>
            <person name="Garry L."/>
            <person name="Ghigo J.M."/>
            <person name="Gilles A.M."/>
            <person name="Johnson J."/>
            <person name="Le Bouguenec C."/>
            <person name="Lescat M."/>
            <person name="Mangenot S."/>
            <person name="Martinez-Jehanne V."/>
            <person name="Matic I."/>
            <person name="Nassif X."/>
            <person name="Oztas S."/>
            <person name="Petit M.A."/>
            <person name="Pichon C."/>
            <person name="Rouy Z."/>
            <person name="Ruf C.S."/>
            <person name="Schneider D."/>
            <person name="Tourret J."/>
            <person name="Vacherie B."/>
            <person name="Vallenet D."/>
            <person name="Medigue C."/>
            <person name="Rocha E.P.C."/>
            <person name="Denamur E."/>
        </authorList>
    </citation>
    <scope>NUCLEOTIDE SEQUENCE [LARGE SCALE GENOMIC DNA]</scope>
    <source>
        <strain>S88 / ExPEC</strain>
    </source>
</reference>
<keyword id="KW-1185">Reference proteome</keyword>
<keyword id="KW-0687">Ribonucleoprotein</keyword>
<keyword id="KW-0689">Ribosomal protein</keyword>
<keyword id="KW-0694">RNA-binding</keyword>
<keyword id="KW-0699">rRNA-binding</keyword>
<sequence length="110" mass="12226">METIAKHRHARSSAQKVRLVADLIRGKKVSQALDILTYTNKKAAVLVKKVLESAIANAEHNDGADIDDLKVTKIFVDEGPSMKRIMPRAKGRADRILKRTSHITVVVSDR</sequence>
<accession>B7MCT0</accession>
<comment type="function">
    <text evidence="1">This protein binds specifically to 23S rRNA; its binding is stimulated by other ribosomal proteins, e.g. L4, L17, and L20. It is important during the early stages of 50S assembly. It makes multiple contacts with different domains of the 23S rRNA in the assembled 50S subunit and ribosome (By similarity).</text>
</comment>
<comment type="function">
    <text evidence="1">The globular domain of the protein is located near the polypeptide exit tunnel on the outside of the subunit, while an extended beta-hairpin is found that lines the wall of the exit tunnel in the center of the 70S ribosome.</text>
</comment>
<comment type="subunit">
    <text evidence="1">Part of the 50S ribosomal subunit.</text>
</comment>
<comment type="similarity">
    <text evidence="1">Belongs to the universal ribosomal protein uL22 family.</text>
</comment>
<name>RL22_ECO45</name>
<evidence type="ECO:0000255" key="1">
    <source>
        <dbReference type="HAMAP-Rule" id="MF_01331"/>
    </source>
</evidence>
<evidence type="ECO:0000305" key="2"/>
<dbReference type="EMBL" id="CU928161">
    <property type="protein sequence ID" value="CAR04919.1"/>
    <property type="molecule type" value="Genomic_DNA"/>
</dbReference>
<dbReference type="RefSeq" id="WP_000447529.1">
    <property type="nucleotide sequence ID" value="NC_011742.1"/>
</dbReference>
<dbReference type="EMDB" id="EMD-7970"/>
<dbReference type="EMDB" id="EMD-8826"/>
<dbReference type="EMDB" id="EMD-8829"/>
<dbReference type="SMR" id="B7MCT0"/>
<dbReference type="IntAct" id="B7MCT0">
    <property type="interactions" value="1"/>
</dbReference>
<dbReference type="GeneID" id="93778672"/>
<dbReference type="KEGG" id="ecz:ECS88_3702"/>
<dbReference type="HOGENOM" id="CLU_083987_3_3_6"/>
<dbReference type="Proteomes" id="UP000000747">
    <property type="component" value="Chromosome"/>
</dbReference>
<dbReference type="GO" id="GO:0022625">
    <property type="term" value="C:cytosolic large ribosomal subunit"/>
    <property type="evidence" value="ECO:0007669"/>
    <property type="project" value="TreeGrafter"/>
</dbReference>
<dbReference type="GO" id="GO:0019843">
    <property type="term" value="F:rRNA binding"/>
    <property type="evidence" value="ECO:0007669"/>
    <property type="project" value="UniProtKB-UniRule"/>
</dbReference>
<dbReference type="GO" id="GO:0003735">
    <property type="term" value="F:structural constituent of ribosome"/>
    <property type="evidence" value="ECO:0007669"/>
    <property type="project" value="InterPro"/>
</dbReference>
<dbReference type="GO" id="GO:0006412">
    <property type="term" value="P:translation"/>
    <property type="evidence" value="ECO:0007669"/>
    <property type="project" value="UniProtKB-UniRule"/>
</dbReference>
<dbReference type="CDD" id="cd00336">
    <property type="entry name" value="Ribosomal_L22"/>
    <property type="match status" value="1"/>
</dbReference>
<dbReference type="FunFam" id="3.90.470.10:FF:000001">
    <property type="entry name" value="50S ribosomal protein L22"/>
    <property type="match status" value="1"/>
</dbReference>
<dbReference type="Gene3D" id="3.90.470.10">
    <property type="entry name" value="Ribosomal protein L22/L17"/>
    <property type="match status" value="1"/>
</dbReference>
<dbReference type="HAMAP" id="MF_01331_B">
    <property type="entry name" value="Ribosomal_uL22_B"/>
    <property type="match status" value="1"/>
</dbReference>
<dbReference type="InterPro" id="IPR001063">
    <property type="entry name" value="Ribosomal_uL22"/>
</dbReference>
<dbReference type="InterPro" id="IPR005727">
    <property type="entry name" value="Ribosomal_uL22_bac/chlpt-type"/>
</dbReference>
<dbReference type="InterPro" id="IPR047867">
    <property type="entry name" value="Ribosomal_uL22_bac/org-type"/>
</dbReference>
<dbReference type="InterPro" id="IPR018260">
    <property type="entry name" value="Ribosomal_uL22_CS"/>
</dbReference>
<dbReference type="InterPro" id="IPR036394">
    <property type="entry name" value="Ribosomal_uL22_sf"/>
</dbReference>
<dbReference type="NCBIfam" id="TIGR01044">
    <property type="entry name" value="rplV_bact"/>
    <property type="match status" value="1"/>
</dbReference>
<dbReference type="PANTHER" id="PTHR13501">
    <property type="entry name" value="CHLOROPLAST 50S RIBOSOMAL PROTEIN L22-RELATED"/>
    <property type="match status" value="1"/>
</dbReference>
<dbReference type="PANTHER" id="PTHR13501:SF8">
    <property type="entry name" value="LARGE RIBOSOMAL SUBUNIT PROTEIN UL22M"/>
    <property type="match status" value="1"/>
</dbReference>
<dbReference type="Pfam" id="PF00237">
    <property type="entry name" value="Ribosomal_L22"/>
    <property type="match status" value="1"/>
</dbReference>
<dbReference type="SUPFAM" id="SSF54843">
    <property type="entry name" value="Ribosomal protein L22"/>
    <property type="match status" value="1"/>
</dbReference>
<dbReference type="PROSITE" id="PS00464">
    <property type="entry name" value="RIBOSOMAL_L22"/>
    <property type="match status" value="1"/>
</dbReference>
<proteinExistence type="inferred from homology"/>
<protein>
    <recommendedName>
        <fullName evidence="1">Large ribosomal subunit protein uL22</fullName>
    </recommendedName>
    <alternativeName>
        <fullName evidence="2">50S ribosomal protein L22</fullName>
    </alternativeName>
</protein>
<organism>
    <name type="scientific">Escherichia coli O45:K1 (strain S88 / ExPEC)</name>
    <dbReference type="NCBI Taxonomy" id="585035"/>
    <lineage>
        <taxon>Bacteria</taxon>
        <taxon>Pseudomonadati</taxon>
        <taxon>Pseudomonadota</taxon>
        <taxon>Gammaproteobacteria</taxon>
        <taxon>Enterobacterales</taxon>
        <taxon>Enterobacteriaceae</taxon>
        <taxon>Escherichia</taxon>
    </lineage>
</organism>
<feature type="chain" id="PRO_1000142254" description="Large ribosomal subunit protein uL22">
    <location>
        <begin position="1"/>
        <end position="110"/>
    </location>
</feature>
<gene>
    <name evidence="1" type="primary">rplV</name>
    <name type="ordered locus">ECS88_3702</name>
</gene>